<comment type="function">
    <text evidence="4 6 7 8 9">Required for optimal lysosomal function (PubMed:21224396). Blocks EGF-stimulated EGFR intraluminal sorting and degradation. Conversely by binding with the phosphatidylinositol 4,5-bisphosphate, regulates its PIP5K1C interaction, inhibits HGS ubiquitination and relieves LAPTM4B inhibition of EGFR degradation (PubMed:25588945). Recruits SLC3A2 and SLC7A5 (the Leu transporter) to the lysosome, promoting entry of leucine and other essential amino acid (EAA) into the lysosome, stimulating activation of proton-transporting vacuolar (V)-ATPase protein pump (V-ATPase) and hence mTORC1 activation (PubMed:25998567). Plays a role as negative regulator of TGFB1 production in regulatory T cells (PubMed:26126825). Binds ceramide and facilitates its exit from late endosome in order to control cell death pathways (PubMed:26280656).</text>
</comment>
<comment type="subunit">
    <text evidence="4 5 6 7 8 10">Homooligomer; upon reaching the lysosomes (PubMed:21224396). Interacts with MCOLN1 (PubMed:21224396). Interacts with NEDD4; may play a role in the lysosomal sorting of LAPTM4B; enhances HGS association with NEDD4; mediates inhibition of EGFR degradation (PubMed:22096579, PubMed:25588945). Interacts with PIP5K1C; promotes SNX5 association with LAPTM4B; kinase activity of PIP5K1C is required; interaction is regulated by phosphatidylinositol 4,5-bisphosphate generated by PIP5K1C (PubMed:25588945). Interacts with HGS; promotes HGS ubiquitination (PubMed:25588945). Interacts with SNX5 (PubMed:25588945). Interacts with SLC3A2 and SLC7A5; recruits SLC3A2 and SLC7A5 to lysosomes to promote leucine uptake into these organelles and is required for mTORC1 activation (PubMed:25998567). Interacts with LRRC32; decreases TGFB1 production in regulatory T cells (PubMed:26126825). Interacts with BECN1; competes with EGFR for LAPTM4B binding; regulates EGFR activity (PubMed:28479384). Interacts with EGFR; positively correlates with EGFR activation (PubMed:28479384).</text>
</comment>
<comment type="interaction">
    <interactant intactId="EBI-3267258">
        <id>Q86VI4</id>
    </interactant>
    <interactant intactId="EBI-1057359">
        <id>P08183</id>
        <label>ABCB1</label>
    </interactant>
    <organismsDiffer>false</organismsDiffer>
    <experiments>2</experiments>
</comment>
<comment type="interaction">
    <interactant intactId="EBI-3267258">
        <id>Q86VI4</id>
    </interactant>
    <interactant intactId="EBI-2130213">
        <id>Q99675</id>
        <label>CGRRF1</label>
    </interactant>
    <organismsDiffer>false</organismsDiffer>
    <experiments>3</experiments>
</comment>
<comment type="interaction">
    <interactant intactId="EBI-3267258">
        <id>Q86VI4</id>
    </interactant>
    <interactant intactId="EBI-12019274">
        <id>Q4LDR2</id>
        <label>CTXN3</label>
    </interactant>
    <organismsDiffer>false</organismsDiffer>
    <experiments>3</experiments>
</comment>
<comment type="interaction">
    <interactant intactId="EBI-3267258">
        <id>Q86VI4</id>
    </interactant>
    <interactant intactId="EBI-10269179">
        <id>Q8NBI2</id>
        <label>CYB561A3</label>
    </interactant>
    <organismsDiffer>false</organismsDiffer>
    <experiments>3</experiments>
</comment>
<comment type="interaction">
    <interactant intactId="EBI-3267258">
        <id>Q86VI4</id>
    </interactant>
    <interactant intactId="EBI-297353">
        <id>P00533</id>
        <label>EGFR</label>
    </interactant>
    <organismsDiffer>false</organismsDiffer>
    <experiments>10</experiments>
</comment>
<comment type="interaction">
    <interactant intactId="EBI-3267258">
        <id>Q86VI4</id>
    </interactant>
    <interactant intactId="EBI-4319440">
        <id>P54849</id>
        <label>EMP1</label>
    </interactant>
    <organismsDiffer>false</organismsDiffer>
    <experiments>3</experiments>
</comment>
<comment type="interaction">
    <interactant intactId="EBI-3267258">
        <id>Q86VI4</id>
    </interactant>
    <interactant intactId="EBI-355383">
        <id>Q96A65</id>
        <label>EXOC4</label>
    </interactant>
    <organismsDiffer>false</organismsDiffer>
    <experiments>2</experiments>
</comment>
<comment type="interaction">
    <interactant intactId="EBI-3267258">
        <id>Q86VI4</id>
    </interactant>
    <interactant intactId="EBI-17458373">
        <id>P48165</id>
        <label>GJA8</label>
    </interactant>
    <organismsDiffer>false</organismsDiffer>
    <experiments>3</experiments>
</comment>
<comment type="interaction">
    <interactant intactId="EBI-3267258">
        <id>Q86VI4</id>
    </interactant>
    <interactant intactId="EBI-11721746">
        <id>Q8TED1</id>
        <label>GPX8</label>
    </interactant>
    <organismsDiffer>false</organismsDiffer>
    <experiments>3</experiments>
</comment>
<comment type="interaction">
    <interactant intactId="EBI-3267258">
        <id>Q86VI4</id>
    </interactant>
    <interactant intactId="EBI-1547250">
        <id>P17181</id>
        <label>IFNAR1</label>
    </interactant>
    <organismsDiffer>false</organismsDiffer>
    <experiments>3</experiments>
</comment>
<comment type="interaction">
    <interactant intactId="EBI-3267258">
        <id>Q86VI4</id>
    </interactant>
    <interactant intactId="EBI-720480">
        <id>P24593</id>
        <label>IGFBP5</label>
    </interactant>
    <organismsDiffer>false</organismsDiffer>
    <experiments>3</experiments>
</comment>
<comment type="interaction">
    <interactant intactId="EBI-3267258">
        <id>Q86VI4</id>
    </interactant>
    <interactant intactId="EBI-1266923">
        <id>Q6UXK2</id>
        <label>ISLR2</label>
    </interactant>
    <organismsDiffer>false</organismsDiffer>
    <experiments>3</experiments>
</comment>
<comment type="interaction">
    <interactant intactId="EBI-3267258">
        <id>Q86VI4</id>
    </interactant>
    <interactant intactId="EBI-3923617">
        <id>Q9H2K0</id>
        <label>MTIF3</label>
    </interactant>
    <organismsDiffer>false</organismsDiffer>
    <experiments>3</experiments>
</comment>
<comment type="interaction">
    <interactant intactId="EBI-3267258">
        <id>Q86VI4</id>
    </interactant>
    <interactant intactId="EBI-10178964">
        <id>Q58DX5</id>
        <label>NAALADL2</label>
    </interactant>
    <organismsDiffer>false</organismsDiffer>
    <experiments>3</experiments>
</comment>
<comment type="interaction">
    <interactant intactId="EBI-3267258">
        <id>Q86VI4</id>
    </interactant>
    <interactant intactId="EBI-12842334">
        <id>Q02297-10</id>
        <label>NRG1</label>
    </interactant>
    <organismsDiffer>false</organismsDiffer>
    <experiments>3</experiments>
</comment>
<comment type="interaction">
    <interactant intactId="EBI-3267258">
        <id>Q86VI4</id>
    </interactant>
    <interactant intactId="EBI-12382569">
        <id>Q2M2E3</id>
        <label>ODF4</label>
    </interactant>
    <organismsDiffer>false</organismsDiffer>
    <experiments>3</experiments>
</comment>
<comment type="interaction">
    <interactant intactId="EBI-3267258">
        <id>Q86VI4</id>
    </interactant>
    <interactant intactId="EBI-1564650">
        <id>Q14108</id>
        <label>SCARB2</label>
    </interactant>
    <organismsDiffer>false</organismsDiffer>
    <experiments>3</experiments>
</comment>
<comment type="interaction">
    <interactant intactId="EBI-3267258">
        <id>Q86VI4</id>
    </interactant>
    <interactant intactId="EBI-2548832">
        <id>Q8N661</id>
        <label>TMEM86B</label>
    </interactant>
    <organismsDiffer>false</organismsDiffer>
    <experiments>3</experiments>
</comment>
<comment type="interaction">
    <interactant intactId="EBI-3267258">
        <id>Q86VI4</id>
    </interactant>
    <interactant intactId="EBI-11988865">
        <id>A5PKU2</id>
        <label>TUSC5</label>
    </interactant>
    <organismsDiffer>false</organismsDiffer>
    <experiments>3</experiments>
</comment>
<comment type="interaction">
    <interactant intactId="EBI-3267258">
        <id>Q86VI4</id>
    </interactant>
    <interactant intactId="EBI-2857623">
        <id>Q96FB2</id>
    </interactant>
    <organismsDiffer>false</organismsDiffer>
    <experiments>3</experiments>
</comment>
<comment type="interaction">
    <interactant intactId="EBI-3267286">
        <id>Q86VI4-3</id>
    </interactant>
    <interactant intactId="EBI-79464">
        <id>P27986</id>
        <label>PIK3R1</label>
    </interactant>
    <organismsDiffer>false</organismsDiffer>
    <experiments>2</experiments>
</comment>
<comment type="subcellular location">
    <subcellularLocation>
        <location evidence="3">Endomembrane system</location>
        <topology evidence="3">Multi-pass membrane protein</topology>
    </subcellularLocation>
    <subcellularLocation>
        <location evidence="4 5 6">Late endosome membrane</location>
    </subcellularLocation>
    <subcellularLocation>
        <location evidence="5">Cell membrane</location>
    </subcellularLocation>
    <subcellularLocation>
        <location evidence="5">Cell projection</location>
    </subcellularLocation>
    <subcellularLocation>
        <location evidence="4 5">Lysosome membrane</location>
    </subcellularLocation>
    <subcellularLocation>
        <location>Endosome membrane</location>
    </subcellularLocation>
    <subcellularLocation>
        <location evidence="9">Endosome</location>
        <location evidence="9">Multivesicular body membrane</location>
    </subcellularLocation>
    <subcellularLocation>
        <location evidence="9">Endosome</location>
        <location evidence="9">Multivesicular body lumen</location>
    </subcellularLocation>
</comment>
<comment type="alternative products">
    <event type="alternative splicing"/>
    <isoform>
        <id>Q86VI4-3</id>
        <name>1</name>
        <sequence type="displayed"/>
    </isoform>
    <isoform>
        <id>Q86VI4-2</id>
        <name>2</name>
        <sequence type="described" ref="VSP_059831"/>
    </isoform>
</comment>
<comment type="PTM">
    <text evidence="4">Undergoes proteolytic cleavage following delivery to the lysosomes.</text>
</comment>
<comment type="PTM">
    <text evidence="5">Ubiquitinated by NEDD4.</text>
</comment>
<comment type="similarity">
    <text evidence="12">Belongs to the LAPTM4/LAPTM5 transporter family.</text>
</comment>
<comment type="sequence caution" evidence="12">
    <conflict type="miscellaneous discrepancy">
        <sequence resource="EMBL-CDS" id="AAO84265"/>
    </conflict>
    <text>Probable cloning artifact.</text>
</comment>
<feature type="chain" id="PRO_0000249721" description="Lysosomal-associated transmembrane protein 4B">
    <location>
        <begin position="1"/>
        <end position="317"/>
    </location>
</feature>
<feature type="transmembrane region" description="Helical" evidence="1">
    <location>
        <begin position="117"/>
        <end position="137"/>
    </location>
</feature>
<feature type="transmembrane region" description="Helical" evidence="1">
    <location>
        <begin position="163"/>
        <end position="183"/>
    </location>
</feature>
<feature type="transmembrane region" description="Helical" evidence="1">
    <location>
        <begin position="191"/>
        <end position="211"/>
    </location>
</feature>
<feature type="transmembrane region" description="Helical" evidence="1">
    <location>
        <begin position="244"/>
        <end position="264"/>
    </location>
</feature>
<feature type="region of interest" description="Disordered" evidence="2">
    <location>
        <begin position="25"/>
        <end position="73"/>
    </location>
</feature>
<feature type="region of interest" description="Required for NEDD4 interaction" evidence="5">
    <location>
        <begin position="205"/>
        <end position="221"/>
    </location>
</feature>
<feature type="compositionally biased region" description="Basic and acidic residues" evidence="2">
    <location>
        <begin position="32"/>
        <end position="59"/>
    </location>
</feature>
<feature type="splice variant" id="VSP_059831" description="In isoform 2.">
    <location>
        <begin position="1"/>
        <end position="91"/>
    </location>
</feature>
<feature type="mutagenesis site" description="Abolishes binding to NEDD4; when associated with A-312. Increases localization to cell membrane; when associated with A-312. Retains association with HGS and enhances PIP5K1C interaction; when associated with A-312. Does not affect EGFR degradation; when associated with A-312." evidence="5 6">
    <original>P</original>
    <variation>A</variation>
    <location>
        <position position="296"/>
    </location>
</feature>
<feature type="mutagenesis site" description="Abolishes binding to NEDD4; when associated with A-296. Increases localization to cell membrane; when associated with A-296. Retains association with HGS and enhances PIP5K1C interaction; when associated with A-296. Does not affect EGFR degradation; when associated with A-296." evidence="5 6">
    <original>P</original>
    <variation>A</variation>
    <location>
        <position position="312"/>
    </location>
</feature>
<feature type="sequence conflict" description="In Ref. 5; CAB66876." evidence="12" ref="5">
    <original>D</original>
    <variation>R</variation>
    <location>
        <position position="32"/>
    </location>
</feature>
<feature type="sequence conflict" description="In Ref. 4; AAH38117." evidence="12" ref="4">
    <original>R</original>
    <variation>S</variation>
    <location>
        <position position="85"/>
    </location>
</feature>
<feature type="sequence conflict" description="In Ref. 4; AAH38117." evidence="12" ref="4">
    <original>M</original>
    <variation>T</variation>
    <location>
        <position position="179"/>
    </location>
</feature>
<accession>Q86VI4</accession>
<accession>Q3ZCV5</accession>
<accession>Q7L909</accession>
<accession>Q86VH8</accession>
<accession>Q9H060</accession>
<reference key="1">
    <citation type="journal article" date="2003" name="Oncogene">
        <title>Molecular cloning and characterization of LAPTM4B, a novel gene upregulated in hepatocellular carcinoma.</title>
        <authorList>
            <person name="Shao G.-Z."/>
            <person name="Zhou R.L."/>
            <person name="Zhang Q.Y."/>
            <person name="Zhang Y."/>
            <person name="Liu J.J."/>
            <person name="Rui J.A."/>
            <person name="Wei X."/>
            <person name="Ye D.X."/>
        </authorList>
    </citation>
    <scope>NUCLEOTIDE SEQUENCE [MRNA] (ISOFORM 1)</scope>
    <scope>SUBCELLULAR LOCATION</scope>
</reference>
<reference key="2">
    <citation type="submission" date="2000-10" db="EMBL/GenBank/DDBJ databases">
        <authorList>
            <person name="Hogue D.L."/>
        </authorList>
    </citation>
    <scope>NUCLEOTIDE SEQUENCE [MRNA] (ISOFORM 2)</scope>
</reference>
<reference key="3">
    <citation type="journal article" date="2005" name="DNA Res.">
        <title>Signal sequence and keyword trap in silico for selection of full-length human cDNAs encoding secretion or membrane proteins from oligo-capped cDNA libraries.</title>
        <authorList>
            <person name="Otsuki T."/>
            <person name="Ota T."/>
            <person name="Nishikawa T."/>
            <person name="Hayashi K."/>
            <person name="Suzuki Y."/>
            <person name="Yamamoto J."/>
            <person name="Wakamatsu A."/>
            <person name="Kimura K."/>
            <person name="Sakamoto K."/>
            <person name="Hatano N."/>
            <person name="Kawai Y."/>
            <person name="Ishii S."/>
            <person name="Saito K."/>
            <person name="Kojima S."/>
            <person name="Sugiyama T."/>
            <person name="Ono T."/>
            <person name="Okano K."/>
            <person name="Yoshikawa Y."/>
            <person name="Aotsuka S."/>
            <person name="Sasaki N."/>
            <person name="Hattori A."/>
            <person name="Okumura K."/>
            <person name="Nagai K."/>
            <person name="Sugano S."/>
            <person name="Isogai T."/>
        </authorList>
    </citation>
    <scope>NUCLEOTIDE SEQUENCE [LARGE SCALE MRNA] (ISOFORM 2)</scope>
</reference>
<reference key="4">
    <citation type="journal article" date="2004" name="Genome Res.">
        <title>The status, quality, and expansion of the NIH full-length cDNA project: the Mammalian Gene Collection (MGC).</title>
        <authorList>
            <consortium name="The MGC Project Team"/>
        </authorList>
    </citation>
    <scope>NUCLEOTIDE SEQUENCE [LARGE SCALE MRNA] (ISOFORMS 1 AND 2)</scope>
    <source>
        <tissue>Hippocampus</tissue>
        <tissue>Lung</tissue>
        <tissue>Retinoblastoma</tissue>
    </source>
</reference>
<reference key="5">
    <citation type="journal article" date="2001" name="Genome Res.">
        <title>Towards a catalog of human genes and proteins: sequencing and analysis of 500 novel complete protein coding human cDNAs.</title>
        <authorList>
            <person name="Wiemann S."/>
            <person name="Weil B."/>
            <person name="Wellenreuther R."/>
            <person name="Gassenhuber J."/>
            <person name="Glassl S."/>
            <person name="Ansorge W."/>
            <person name="Boecher M."/>
            <person name="Bloecker H."/>
            <person name="Bauersachs S."/>
            <person name="Blum H."/>
            <person name="Lauber J."/>
            <person name="Duesterhoeft A."/>
            <person name="Beyer A."/>
            <person name="Koehrer K."/>
            <person name="Strack N."/>
            <person name="Mewes H.-W."/>
            <person name="Ottenwaelder B."/>
            <person name="Obermaier B."/>
            <person name="Tampe J."/>
            <person name="Heubner D."/>
            <person name="Wambutt R."/>
            <person name="Korn B."/>
            <person name="Klein M."/>
            <person name="Poustka A."/>
        </authorList>
    </citation>
    <scope>NUCLEOTIDE SEQUENCE [LARGE SCALE MRNA] OF 31-317 (ISOFORM 1)</scope>
    <source>
        <tissue>Uterus</tissue>
    </source>
</reference>
<reference key="6">
    <citation type="journal article" date="2011" name="J. Cell Sci.">
        <title>LAPTMs regulate lysosomal function and interact with mucolipin 1: new clues for understanding mucolipidosis type IV.</title>
        <authorList>
            <person name="Vergarajauregui S."/>
            <person name="Martina J.A."/>
            <person name="Puertollano R."/>
        </authorList>
    </citation>
    <scope>INTERACTION WITH MCOLN1</scope>
    <scope>SUBCELLULAR LOCATION</scope>
    <scope>PROTEOLYTIC CLEAVAGE</scope>
    <scope>FUNCTION</scope>
</reference>
<reference key="7">
    <citation type="journal article" date="2011" name="PLoS ONE">
        <title>A role for the ubiquitin ligase Nedd4 in membrane sorting of LAPTM4 proteins.</title>
        <authorList>
            <person name="Milkereit R."/>
            <person name="Rotin D."/>
        </authorList>
    </citation>
    <scope>SUBCELLULAR LOCATION</scope>
    <scope>INTERACTION WITH NEDD4</scope>
    <scope>UBIQUITINATION</scope>
    <scope>MUTAGENESIS OF PRO-296 AND PRO-312</scope>
    <scope>REGION</scope>
</reference>
<reference key="8">
    <citation type="journal article" date="2015" name="EMBO J.">
        <title>LAPTM4B is a PtdIns(4,5)P2 effector that regulates EGFR signaling, lysosomal sorting, and degradation.</title>
        <authorList>
            <person name="Tan X."/>
            <person name="Sun Y."/>
            <person name="Thapa N."/>
            <person name="Liao Y."/>
            <person name="Hedman A.C."/>
            <person name="Anderson R.A."/>
        </authorList>
    </citation>
    <scope>INTERACTION WITH PIP5K1C AND HGS</scope>
    <scope>SUBCELLULAR LOCATION</scope>
    <scope>FUNCTION</scope>
    <scope>MUTAGENESIS OF PRO-296 AND PRO-312</scope>
</reference>
<reference key="9">
    <citation type="journal article" date="2015" name="J. Biol. Chem.">
        <title>Lysosomal-associated Transmembrane Protein 4B (LAPTM4B) Decreases Transforming Growth Factor beta1 (TGF-beta1) Production in Human Regulatory T Cells.</title>
        <authorList>
            <person name="Huygens C."/>
            <person name="Lienart S."/>
            <person name="Dedobbeleer O."/>
            <person name="Stockis J."/>
            <person name="Gauthy E."/>
            <person name="Coulie P.G."/>
            <person name="Lucas S."/>
        </authorList>
    </citation>
    <scope>INTERACTION WITH LRRC32</scope>
    <scope>FUNCTION</scope>
</reference>
<reference key="10">
    <citation type="journal article" date="2015" name="Nat. Chem. Biol.">
        <title>LAPTM4B facilitates late endosomal ceramide export to control cell death pathways.</title>
        <authorList>
            <person name="Blom T."/>
            <person name="Li S."/>
            <person name="Dichlberger A."/>
            <person name="Baeck N."/>
            <person name="Kim Y.A."/>
            <person name="Loizides-Mangold U."/>
            <person name="Riezman H."/>
            <person name="Bittman R."/>
            <person name="Ikonen E."/>
        </authorList>
    </citation>
    <scope>FUNCTION</scope>
    <scope>SUBCELLULAR LOCATION</scope>
</reference>
<reference key="11">
    <citation type="journal article" date="2015" name="Nat. Commun.">
        <title>LAPTM4b recruits the LAT1-4F2hc Leu transporter to lysosomes and promotes mTORC1 activation.</title>
        <authorList>
            <person name="Milkereit R."/>
            <person name="Persaud A."/>
            <person name="Vanoaica L."/>
            <person name="Guetg A."/>
            <person name="Verrey F."/>
            <person name="Rotin D."/>
        </authorList>
    </citation>
    <scope>INTERACTION WITH SLC3A2 AND SLC7A5</scope>
    <scope>FUNCTION</scope>
</reference>
<reference key="12">
    <citation type="journal article" date="2017" name="Gene">
        <title>Beclin1 antagonizes LAPTM4B-mediated EGFR overactivation in gastric cancer cells.</title>
        <authorList>
            <person name="Tian M."/>
            <person name="Chen Y."/>
            <person name="Tian D."/>
            <person name="Qiao X."/>
            <person name="Ma Z."/>
            <person name="Li J."/>
        </authorList>
    </citation>
    <scope>INTERACTION WITH BECN1 AND EGFR</scope>
</reference>
<protein>
    <recommendedName>
        <fullName evidence="12">Lysosomal-associated transmembrane protein 4B</fullName>
    </recommendedName>
    <alternativeName>
        <fullName evidence="11">Lysosome-associated transmembrane protein 4-beta</fullName>
    </alternativeName>
</protein>
<keyword id="KW-0025">Alternative splicing</keyword>
<keyword id="KW-1003">Cell membrane</keyword>
<keyword id="KW-0966">Cell projection</keyword>
<keyword id="KW-0967">Endosome</keyword>
<keyword id="KW-0458">Lysosome</keyword>
<keyword id="KW-0472">Membrane</keyword>
<keyword id="KW-1267">Proteomics identification</keyword>
<keyword id="KW-1185">Reference proteome</keyword>
<keyword id="KW-0812">Transmembrane</keyword>
<keyword id="KW-1133">Transmembrane helix</keyword>
<keyword id="KW-0813">Transport</keyword>
<keyword id="KW-0832">Ubl conjugation</keyword>
<proteinExistence type="evidence at protein level"/>
<dbReference type="EMBL" id="AF527412">
    <property type="protein sequence ID" value="AAP14034.1"/>
    <property type="molecule type" value="mRNA"/>
</dbReference>
<dbReference type="EMBL" id="AY057051">
    <property type="protein sequence ID" value="AAL17908.2"/>
    <property type="molecule type" value="mRNA"/>
</dbReference>
<dbReference type="EMBL" id="AY261384">
    <property type="protein sequence ID" value="AAO84265.1"/>
    <property type="status" value="ALT_SEQ"/>
    <property type="molecule type" value="mRNA"/>
</dbReference>
<dbReference type="EMBL" id="AF317417">
    <property type="protein sequence ID" value="AAK69595.1"/>
    <property type="molecule type" value="mRNA"/>
</dbReference>
<dbReference type="EMBL" id="AK075326">
    <property type="protein sequence ID" value="BAC11549.1"/>
    <property type="molecule type" value="mRNA"/>
</dbReference>
<dbReference type="EMBL" id="BC014129">
    <property type="protein sequence ID" value="AAH14129.1"/>
    <property type="molecule type" value="mRNA"/>
</dbReference>
<dbReference type="EMBL" id="BC031021">
    <property type="protein sequence ID" value="AAH31021.1"/>
    <property type="molecule type" value="mRNA"/>
</dbReference>
<dbReference type="EMBL" id="BC038117">
    <property type="protein sequence ID" value="AAH38117.1"/>
    <property type="molecule type" value="mRNA"/>
</dbReference>
<dbReference type="EMBL" id="AL136942">
    <property type="protein sequence ID" value="CAB66876.2"/>
    <property type="molecule type" value="mRNA"/>
</dbReference>
<dbReference type="CCDS" id="CCDS6275.2">
    <molecule id="Q86VI4-2"/>
</dbReference>
<dbReference type="RefSeq" id="NP_060877.3">
    <molecule id="Q86VI4-2"/>
    <property type="nucleotide sequence ID" value="NM_018407.4"/>
</dbReference>
<dbReference type="BioGRID" id="120633">
    <property type="interactions" value="48"/>
</dbReference>
<dbReference type="FunCoup" id="Q86VI4">
    <property type="interactions" value="1249"/>
</dbReference>
<dbReference type="IntAct" id="Q86VI4">
    <property type="interactions" value="50"/>
</dbReference>
<dbReference type="MINT" id="Q86VI4"/>
<dbReference type="STRING" id="9606.ENSP00000402301"/>
<dbReference type="TCDB" id="2.A.74.1.3">
    <property type="family name" value="the 4 tms multidrug endosomal transporter (met) family"/>
</dbReference>
<dbReference type="iPTMnet" id="Q86VI4"/>
<dbReference type="PhosphoSitePlus" id="Q86VI4"/>
<dbReference type="SwissPalm" id="Q86VI4"/>
<dbReference type="BioMuta" id="LAPTM4B"/>
<dbReference type="DMDM" id="74714056"/>
<dbReference type="jPOST" id="Q86VI4"/>
<dbReference type="MassIVE" id="Q86VI4"/>
<dbReference type="PaxDb" id="9606-ENSP00000402301"/>
<dbReference type="PeptideAtlas" id="Q86VI4"/>
<dbReference type="ProteomicsDB" id="70025">
    <molecule id="Q86VI4-2"/>
</dbReference>
<dbReference type="ProteomicsDB" id="70026">
    <molecule id="Q86VI4-3"/>
</dbReference>
<dbReference type="Pumba" id="Q86VI4"/>
<dbReference type="Antibodypedia" id="26024">
    <property type="antibodies" value="151 antibodies from 27 providers"/>
</dbReference>
<dbReference type="DNASU" id="55353"/>
<dbReference type="Ensembl" id="ENST00000445593.6">
    <molecule id="Q86VI4-3"/>
    <property type="protein sequence ID" value="ENSP00000402301.2"/>
    <property type="gene ID" value="ENSG00000104341.17"/>
</dbReference>
<dbReference type="Ensembl" id="ENST00000521545.7">
    <molecule id="Q86VI4-2"/>
    <property type="protein sequence ID" value="ENSP00000428409.1"/>
    <property type="gene ID" value="ENSG00000104341.17"/>
</dbReference>
<dbReference type="Ensembl" id="ENST00000619747.1">
    <molecule id="Q86VI4-3"/>
    <property type="protein sequence ID" value="ENSP00000482533.1"/>
    <property type="gene ID" value="ENSG00000104341.17"/>
</dbReference>
<dbReference type="GeneID" id="55353"/>
<dbReference type="KEGG" id="hsa:55353"/>
<dbReference type="MANE-Select" id="ENST00000521545.7">
    <molecule id="Q86VI4-2"/>
    <property type="protein sequence ID" value="ENSP00000428409.1"/>
    <property type="RefSeq nucleotide sequence ID" value="NM_018407.6"/>
    <property type="RefSeq protein sequence ID" value="NP_060877.4"/>
</dbReference>
<dbReference type="UCSC" id="uc003yia.4">
    <molecule id="Q86VI4-3"/>
    <property type="organism name" value="human"/>
</dbReference>
<dbReference type="AGR" id="HGNC:13646"/>
<dbReference type="CTD" id="55353"/>
<dbReference type="DisGeNET" id="55353"/>
<dbReference type="GeneCards" id="LAPTM4B"/>
<dbReference type="HGNC" id="HGNC:13646">
    <property type="gene designation" value="LAPTM4B"/>
</dbReference>
<dbReference type="HPA" id="ENSG00000104341">
    <property type="expression patterns" value="Tissue enhanced (retina)"/>
</dbReference>
<dbReference type="MIM" id="613296">
    <property type="type" value="gene"/>
</dbReference>
<dbReference type="neXtProt" id="NX_Q86VI4"/>
<dbReference type="OpenTargets" id="ENSG00000104341"/>
<dbReference type="PharmGKB" id="PA128395785"/>
<dbReference type="VEuPathDB" id="HostDB:ENSG00000104341"/>
<dbReference type="eggNOG" id="ENOG502QSAX">
    <property type="taxonomic scope" value="Eukaryota"/>
</dbReference>
<dbReference type="GeneTree" id="ENSGT00940000153446"/>
<dbReference type="HOGENOM" id="CLU_065068_0_0_1"/>
<dbReference type="InParanoid" id="Q86VI4"/>
<dbReference type="OMA" id="LTDPGQY"/>
<dbReference type="OrthoDB" id="10002163at2759"/>
<dbReference type="PAN-GO" id="Q86VI4">
    <property type="GO annotations" value="1 GO annotation based on evolutionary models"/>
</dbReference>
<dbReference type="PhylomeDB" id="Q86VI4"/>
<dbReference type="TreeFam" id="TF330843"/>
<dbReference type="PathwayCommons" id="Q86VI4"/>
<dbReference type="SignaLink" id="Q86VI4"/>
<dbReference type="BioGRID-ORCS" id="55353">
    <property type="hits" value="12 hits in 1151 CRISPR screens"/>
</dbReference>
<dbReference type="ChiTaRS" id="LAPTM4B">
    <property type="organism name" value="human"/>
</dbReference>
<dbReference type="GeneWiki" id="LAPTM4B"/>
<dbReference type="GenomeRNAi" id="55353"/>
<dbReference type="Pharos" id="Q86VI4">
    <property type="development level" value="Tbio"/>
</dbReference>
<dbReference type="PRO" id="PR:Q86VI4"/>
<dbReference type="Proteomes" id="UP000005640">
    <property type="component" value="Chromosome 8"/>
</dbReference>
<dbReference type="RNAct" id="Q86VI4">
    <property type="molecule type" value="protein"/>
</dbReference>
<dbReference type="Bgee" id="ENSG00000104341">
    <property type="expression patterns" value="Expressed in pigmented layer of retina and 212 other cell types or tissues"/>
</dbReference>
<dbReference type="ExpressionAtlas" id="Q86VI4">
    <property type="expression patterns" value="baseline and differential"/>
</dbReference>
<dbReference type="GO" id="GO:0042995">
    <property type="term" value="C:cell projection"/>
    <property type="evidence" value="ECO:0000314"/>
    <property type="project" value="UniProtKB"/>
</dbReference>
<dbReference type="GO" id="GO:0005769">
    <property type="term" value="C:early endosome"/>
    <property type="evidence" value="ECO:0000314"/>
    <property type="project" value="UniProtKB"/>
</dbReference>
<dbReference type="GO" id="GO:0005768">
    <property type="term" value="C:endosome"/>
    <property type="evidence" value="ECO:0000314"/>
    <property type="project" value="UniProtKB"/>
</dbReference>
<dbReference type="GO" id="GO:0031902">
    <property type="term" value="C:late endosome membrane"/>
    <property type="evidence" value="ECO:0000314"/>
    <property type="project" value="UniProtKB"/>
</dbReference>
<dbReference type="GO" id="GO:0005765">
    <property type="term" value="C:lysosomal membrane"/>
    <property type="evidence" value="ECO:0000314"/>
    <property type="project" value="UniProtKB"/>
</dbReference>
<dbReference type="GO" id="GO:0005764">
    <property type="term" value="C:lysosome"/>
    <property type="evidence" value="ECO:0000314"/>
    <property type="project" value="UniProtKB"/>
</dbReference>
<dbReference type="GO" id="GO:0032585">
    <property type="term" value="C:multivesicular body membrane"/>
    <property type="evidence" value="ECO:0000314"/>
    <property type="project" value="UniProtKB"/>
</dbReference>
<dbReference type="GO" id="GO:0097487">
    <property type="term" value="C:multivesicular body, internal vesicle"/>
    <property type="evidence" value="ECO:0000314"/>
    <property type="project" value="UniProtKB"/>
</dbReference>
<dbReference type="GO" id="GO:0005886">
    <property type="term" value="C:plasma membrane"/>
    <property type="evidence" value="ECO:0000314"/>
    <property type="project" value="UniProtKB"/>
</dbReference>
<dbReference type="GO" id="GO:0097001">
    <property type="term" value="F:ceramide binding"/>
    <property type="evidence" value="ECO:0000314"/>
    <property type="project" value="UniProtKB"/>
</dbReference>
<dbReference type="GO" id="GO:0019900">
    <property type="term" value="F:kinase binding"/>
    <property type="evidence" value="ECO:0000353"/>
    <property type="project" value="UniProtKB"/>
</dbReference>
<dbReference type="GO" id="GO:1902936">
    <property type="term" value="F:phosphatidylinositol bisphosphate binding"/>
    <property type="evidence" value="ECO:0000314"/>
    <property type="project" value="UniProtKB"/>
</dbReference>
<dbReference type="GO" id="GO:0031625">
    <property type="term" value="F:ubiquitin protein ligase binding"/>
    <property type="evidence" value="ECO:0000353"/>
    <property type="project" value="UniProtKB"/>
</dbReference>
<dbReference type="GO" id="GO:0007032">
    <property type="term" value="P:endosome organization"/>
    <property type="evidence" value="ECO:0000315"/>
    <property type="project" value="UniProtKB"/>
</dbReference>
<dbReference type="GO" id="GO:0032509">
    <property type="term" value="P:endosome transport via multivesicular body sorting pathway"/>
    <property type="evidence" value="ECO:0000314"/>
    <property type="project" value="UniProtKB"/>
</dbReference>
<dbReference type="GO" id="GO:1905166">
    <property type="term" value="P:negative regulation of lysosomal protein catabolic process"/>
    <property type="evidence" value="ECO:0000315"/>
    <property type="project" value="UniProtKB"/>
</dbReference>
<dbReference type="GO" id="GO:0032911">
    <property type="term" value="P:negative regulation of transforming growth factor beta1 production"/>
    <property type="evidence" value="ECO:0000314"/>
    <property type="project" value="UniProtKB"/>
</dbReference>
<dbReference type="GO" id="GO:0097213">
    <property type="term" value="P:regulation of lysosomal membrane permeability"/>
    <property type="evidence" value="ECO:0000315"/>
    <property type="project" value="UniProtKB"/>
</dbReference>
<dbReference type="GO" id="GO:1905671">
    <property type="term" value="P:regulation of lysosome organization"/>
    <property type="evidence" value="ECO:0000315"/>
    <property type="project" value="UniProtKB"/>
</dbReference>
<dbReference type="InterPro" id="IPR004687">
    <property type="entry name" value="LAPTM4/5"/>
</dbReference>
<dbReference type="InterPro" id="IPR051115">
    <property type="entry name" value="LAPTM_transporter"/>
</dbReference>
<dbReference type="PANTHER" id="PTHR12479">
    <property type="entry name" value="LYSOSOMAL-ASSOCIATED TRANSMEMBRANE PROTEIN"/>
    <property type="match status" value="1"/>
</dbReference>
<dbReference type="PANTHER" id="PTHR12479:SF6">
    <property type="entry name" value="LYSOSOMAL-ASSOCIATED TRANSMEMBRANE PROTEIN 4B"/>
    <property type="match status" value="1"/>
</dbReference>
<dbReference type="Pfam" id="PF03821">
    <property type="entry name" value="Mtp"/>
    <property type="match status" value="1"/>
</dbReference>
<gene>
    <name evidence="13" type="primary">LAPTM4B</name>
    <name type="ORF">PSEC0001</name>
</gene>
<organism>
    <name type="scientific">Homo sapiens</name>
    <name type="common">Human</name>
    <dbReference type="NCBI Taxonomy" id="9606"/>
    <lineage>
        <taxon>Eukaryota</taxon>
        <taxon>Metazoa</taxon>
        <taxon>Chordata</taxon>
        <taxon>Craniata</taxon>
        <taxon>Vertebrata</taxon>
        <taxon>Euteleostomi</taxon>
        <taxon>Mammalia</taxon>
        <taxon>Eutheria</taxon>
        <taxon>Euarchontoglires</taxon>
        <taxon>Primates</taxon>
        <taxon>Haplorrhini</taxon>
        <taxon>Catarrhini</taxon>
        <taxon>Hominidae</taxon>
        <taxon>Homo</taxon>
    </lineage>
</organism>
<evidence type="ECO:0000255" key="1"/>
<evidence type="ECO:0000256" key="2">
    <source>
        <dbReference type="SAM" id="MobiDB-lite"/>
    </source>
</evidence>
<evidence type="ECO:0000269" key="3">
    <source>
    </source>
</evidence>
<evidence type="ECO:0000269" key="4">
    <source>
    </source>
</evidence>
<evidence type="ECO:0000269" key="5">
    <source>
    </source>
</evidence>
<evidence type="ECO:0000269" key="6">
    <source>
    </source>
</evidence>
<evidence type="ECO:0000269" key="7">
    <source>
    </source>
</evidence>
<evidence type="ECO:0000269" key="8">
    <source>
    </source>
</evidence>
<evidence type="ECO:0000269" key="9">
    <source>
    </source>
</evidence>
<evidence type="ECO:0000269" key="10">
    <source>
    </source>
</evidence>
<evidence type="ECO:0000303" key="11">
    <source>
    </source>
</evidence>
<evidence type="ECO:0000305" key="12"/>
<evidence type="ECO:0000312" key="13">
    <source>
        <dbReference type="HGNC" id="HGNC:13646"/>
    </source>
</evidence>
<sequence length="317" mass="35123">MTSRTRVTWPSPPRPLPVPAAAAVAFGAKGTDPAEARSSRGIEEAGPRAHGRAGREPERRRSRQQRRGGLQARRSTLLKTCARARATAPGAMKMVAPWTRFYSNSCCLCCHVRTGTILLGVWYLIINAVVLLILLSALADPDQYNFSSSELGGDFEFMDDANMCIAIAISLLMILICAMATYGAYKQRAAWIIPFFCYQIFDFALNMLVAITVLIYPNSIQEYIRQLPPNFPYRDDVMSVNPTCLVLIILLFISIILTFKGYLISCVWNCYRYINGRNSSDVLVYVTSNDTTVLLPPYDDATVNGAAKEPPPPYVSA</sequence>
<name>LAP4B_HUMAN</name>